<evidence type="ECO:0000255" key="1">
    <source>
        <dbReference type="HAMAP-Rule" id="MF_00031"/>
    </source>
</evidence>
<comment type="function">
    <text evidence="1">The RuvA-RuvB-RuvC complex processes Holliday junction (HJ) DNA during genetic recombination and DNA repair, while the RuvA-RuvB complex plays an important role in the rescue of blocked DNA replication forks via replication fork reversal (RFR). RuvA specifically binds to HJ cruciform DNA, conferring on it an open structure. The RuvB hexamer acts as an ATP-dependent pump, pulling dsDNA into and through the RuvAB complex. HJ branch migration allows RuvC to scan DNA until it finds its consensus sequence, where it cleaves and resolves the cruciform DNA.</text>
</comment>
<comment type="subunit">
    <text evidence="1">Homotetramer. Forms an RuvA(8)-RuvB(12)-Holliday junction (HJ) complex. HJ DNA is sandwiched between 2 RuvA tetramers; dsDNA enters through RuvA and exits via RuvB. An RuvB hexamer assembles on each DNA strand where it exits the tetramer. Each RuvB hexamer is contacted by two RuvA subunits (via domain III) on 2 adjacent RuvB subunits; this complex drives branch migration. In the full resolvosome a probable DNA-RuvA(4)-RuvB(12)-RuvC(2) complex forms which resolves the HJ.</text>
</comment>
<comment type="subcellular location">
    <subcellularLocation>
        <location evidence="1">Cytoplasm</location>
    </subcellularLocation>
</comment>
<comment type="domain">
    <text evidence="1">Has three domains with a flexible linker between the domains II and III and assumes an 'L' shape. Domain III is highly mobile and contacts RuvB.</text>
</comment>
<comment type="similarity">
    <text evidence="1">Belongs to the RuvA family.</text>
</comment>
<sequence>MFAYFKGSLVTALPEEAVIDVSGVAYRMLISATTFRQLPDEGSQVLLYAHLSVREDALQLYGFFKEEERQLFRLLLLTSGVGPKLALAVLSGLQVPEVHEAIMANEPERLYGVSGVGKKTAARIILELRDKILKLPLVTPAAGKAAMPSHHVKDDAVHALVTLGFSRLLAQKAVSALLEEKPEQSVEEVIKYALATIHNS</sequence>
<dbReference type="EMBL" id="CP000492">
    <property type="protein sequence ID" value="ABL64449.1"/>
    <property type="molecule type" value="Genomic_DNA"/>
</dbReference>
<dbReference type="RefSeq" id="WP_011744282.1">
    <property type="nucleotide sequence ID" value="NC_008639.1"/>
</dbReference>
<dbReference type="SMR" id="A1BDH2"/>
<dbReference type="STRING" id="290317.Cpha266_0390"/>
<dbReference type="KEGG" id="cph:Cpha266_0390"/>
<dbReference type="eggNOG" id="COG0632">
    <property type="taxonomic scope" value="Bacteria"/>
</dbReference>
<dbReference type="HOGENOM" id="CLU_087936_2_1_10"/>
<dbReference type="OrthoDB" id="5293449at2"/>
<dbReference type="Proteomes" id="UP000008701">
    <property type="component" value="Chromosome"/>
</dbReference>
<dbReference type="GO" id="GO:0005737">
    <property type="term" value="C:cytoplasm"/>
    <property type="evidence" value="ECO:0007669"/>
    <property type="project" value="UniProtKB-SubCell"/>
</dbReference>
<dbReference type="GO" id="GO:0009379">
    <property type="term" value="C:Holliday junction helicase complex"/>
    <property type="evidence" value="ECO:0007669"/>
    <property type="project" value="InterPro"/>
</dbReference>
<dbReference type="GO" id="GO:0048476">
    <property type="term" value="C:Holliday junction resolvase complex"/>
    <property type="evidence" value="ECO:0007669"/>
    <property type="project" value="UniProtKB-UniRule"/>
</dbReference>
<dbReference type="GO" id="GO:0005524">
    <property type="term" value="F:ATP binding"/>
    <property type="evidence" value="ECO:0007669"/>
    <property type="project" value="InterPro"/>
</dbReference>
<dbReference type="GO" id="GO:0000400">
    <property type="term" value="F:four-way junction DNA binding"/>
    <property type="evidence" value="ECO:0007669"/>
    <property type="project" value="UniProtKB-UniRule"/>
</dbReference>
<dbReference type="GO" id="GO:0009378">
    <property type="term" value="F:four-way junction helicase activity"/>
    <property type="evidence" value="ECO:0007669"/>
    <property type="project" value="InterPro"/>
</dbReference>
<dbReference type="GO" id="GO:0006310">
    <property type="term" value="P:DNA recombination"/>
    <property type="evidence" value="ECO:0007669"/>
    <property type="project" value="UniProtKB-UniRule"/>
</dbReference>
<dbReference type="GO" id="GO:0006281">
    <property type="term" value="P:DNA repair"/>
    <property type="evidence" value="ECO:0007669"/>
    <property type="project" value="UniProtKB-UniRule"/>
</dbReference>
<dbReference type="CDD" id="cd14332">
    <property type="entry name" value="UBA_RuvA_C"/>
    <property type="match status" value="1"/>
</dbReference>
<dbReference type="Gene3D" id="1.10.150.20">
    <property type="entry name" value="5' to 3' exonuclease, C-terminal subdomain"/>
    <property type="match status" value="1"/>
</dbReference>
<dbReference type="Gene3D" id="1.10.8.10">
    <property type="entry name" value="DNA helicase RuvA subunit, C-terminal domain"/>
    <property type="match status" value="1"/>
</dbReference>
<dbReference type="Gene3D" id="2.40.50.140">
    <property type="entry name" value="Nucleic acid-binding proteins"/>
    <property type="match status" value="1"/>
</dbReference>
<dbReference type="HAMAP" id="MF_00031">
    <property type="entry name" value="DNA_HJ_migration_RuvA"/>
    <property type="match status" value="1"/>
</dbReference>
<dbReference type="InterPro" id="IPR013849">
    <property type="entry name" value="DNA_helicase_Holl-junc_RuvA_I"/>
</dbReference>
<dbReference type="InterPro" id="IPR003583">
    <property type="entry name" value="Hlx-hairpin-Hlx_DNA-bd_motif"/>
</dbReference>
<dbReference type="InterPro" id="IPR012340">
    <property type="entry name" value="NA-bd_OB-fold"/>
</dbReference>
<dbReference type="InterPro" id="IPR000085">
    <property type="entry name" value="RuvA"/>
</dbReference>
<dbReference type="InterPro" id="IPR010994">
    <property type="entry name" value="RuvA_2-like"/>
</dbReference>
<dbReference type="InterPro" id="IPR011114">
    <property type="entry name" value="RuvA_C"/>
</dbReference>
<dbReference type="InterPro" id="IPR036267">
    <property type="entry name" value="RuvA_C_sf"/>
</dbReference>
<dbReference type="NCBIfam" id="TIGR00084">
    <property type="entry name" value="ruvA"/>
    <property type="match status" value="1"/>
</dbReference>
<dbReference type="Pfam" id="PF14520">
    <property type="entry name" value="HHH_5"/>
    <property type="match status" value="1"/>
</dbReference>
<dbReference type="Pfam" id="PF07499">
    <property type="entry name" value="RuvA_C"/>
    <property type="match status" value="1"/>
</dbReference>
<dbReference type="Pfam" id="PF01330">
    <property type="entry name" value="RuvA_N"/>
    <property type="match status" value="1"/>
</dbReference>
<dbReference type="SMART" id="SM00278">
    <property type="entry name" value="HhH1"/>
    <property type="match status" value="2"/>
</dbReference>
<dbReference type="SUPFAM" id="SSF46929">
    <property type="entry name" value="DNA helicase RuvA subunit, C-terminal domain"/>
    <property type="match status" value="1"/>
</dbReference>
<dbReference type="SUPFAM" id="SSF50249">
    <property type="entry name" value="Nucleic acid-binding proteins"/>
    <property type="match status" value="1"/>
</dbReference>
<dbReference type="SUPFAM" id="SSF47781">
    <property type="entry name" value="RuvA domain 2-like"/>
    <property type="match status" value="1"/>
</dbReference>
<reference key="1">
    <citation type="submission" date="2006-12" db="EMBL/GenBank/DDBJ databases">
        <title>Complete sequence of Chlorobium phaeobacteroides DSM 266.</title>
        <authorList>
            <consortium name="US DOE Joint Genome Institute"/>
            <person name="Copeland A."/>
            <person name="Lucas S."/>
            <person name="Lapidus A."/>
            <person name="Barry K."/>
            <person name="Detter J.C."/>
            <person name="Glavina del Rio T."/>
            <person name="Hammon N."/>
            <person name="Israni S."/>
            <person name="Pitluck S."/>
            <person name="Goltsman E."/>
            <person name="Schmutz J."/>
            <person name="Larimer F."/>
            <person name="Land M."/>
            <person name="Hauser L."/>
            <person name="Mikhailova N."/>
            <person name="Li T."/>
            <person name="Overmann J."/>
            <person name="Bryant D.A."/>
            <person name="Richardson P."/>
        </authorList>
    </citation>
    <scope>NUCLEOTIDE SEQUENCE [LARGE SCALE GENOMIC DNA]</scope>
    <source>
        <strain>DSM 266 / SMG 266 / 2430</strain>
    </source>
</reference>
<name>RUVA_CHLPD</name>
<gene>
    <name evidence="1" type="primary">ruvA</name>
    <name type="ordered locus">Cpha266_0390</name>
</gene>
<feature type="chain" id="PRO_1000002427" description="Holliday junction branch migration complex subunit RuvA">
    <location>
        <begin position="1"/>
        <end position="200"/>
    </location>
</feature>
<feature type="region of interest" description="Domain I" evidence="1">
    <location>
        <begin position="1"/>
        <end position="64"/>
    </location>
</feature>
<feature type="region of interest" description="Domain II" evidence="1">
    <location>
        <begin position="65"/>
        <end position="143"/>
    </location>
</feature>
<feature type="region of interest" description="Flexible linker" evidence="1">
    <location>
        <begin position="143"/>
        <end position="147"/>
    </location>
</feature>
<feature type="region of interest" description="Domain III" evidence="1">
    <location>
        <begin position="148"/>
        <end position="200"/>
    </location>
</feature>
<keyword id="KW-0963">Cytoplasm</keyword>
<keyword id="KW-0227">DNA damage</keyword>
<keyword id="KW-0233">DNA recombination</keyword>
<keyword id="KW-0234">DNA repair</keyword>
<keyword id="KW-0238">DNA-binding</keyword>
<keyword id="KW-1185">Reference proteome</keyword>
<protein>
    <recommendedName>
        <fullName evidence="1">Holliday junction branch migration complex subunit RuvA</fullName>
    </recommendedName>
</protein>
<organism>
    <name type="scientific">Chlorobium phaeobacteroides (strain DSM 266 / SMG 266 / 2430)</name>
    <dbReference type="NCBI Taxonomy" id="290317"/>
    <lineage>
        <taxon>Bacteria</taxon>
        <taxon>Pseudomonadati</taxon>
        <taxon>Chlorobiota</taxon>
        <taxon>Chlorobiia</taxon>
        <taxon>Chlorobiales</taxon>
        <taxon>Chlorobiaceae</taxon>
        <taxon>Chlorobium/Pelodictyon group</taxon>
        <taxon>Chlorobium</taxon>
    </lineage>
</organism>
<proteinExistence type="inferred from homology"/>
<accession>A1BDH2</accession>